<sequence>MPVYRSKTTTSGRNMAGARALWRATGMKDEDFQKPIIAVANSFTQFVPGHVHLKDLGQLVAREIEKAGGVAKEFNTIAVDDGIAMGHDGMLYSLPSRDIIADSVEYMVNAHCADALVCISNCDKITPGMLMAAMRLNIPVIFVSGGPMEAGKTRLAEHKLDLVDAIVIGTDKNASDEQVEAYERSACPTCGSCSGMFTANSMNCLTEALGLSLPGNGSLLATHADREQLFLEAGRRIVEITKRYYEQDDASVLPRAIATFEAFENAMALDIAMGGSTNTILHLLAAAQEGGVPFTMTDIDRLSRKVPQLCKVAPNTQKYHMEDVHRAGGVVGILAELNRGGLLHNQVPTVHSKTLQEGLDQWDIISTGSDAVATFYRAGPAGIPTQVAFSQATRWPTLDADRVEGCIRSVEHAYSKEGGLAVLRGNIALDGCVVKTSGVDESIWVFEGPAYVVESQDQAVKDILDGKVKAGDVVVIRYEGPRGGPGMQEMLYPTSYLKSQGLGKACALLTDGRFSGGTSGLSIGHVSPEAAAGGAIGLVETGDIIHIDIPNRSINVKLSNQELAERRDAMAAKGNKAWKPIEARPRKVSASLKAYAMLATSADKGAVRDLSKLD</sequence>
<protein>
    <recommendedName>
        <fullName evidence="1">Dihydroxy-acid dehydratase</fullName>
        <shortName evidence="1">DAD</shortName>
        <ecNumber evidence="1">4.2.1.9</ecNumber>
    </recommendedName>
</protein>
<feature type="chain" id="PRO_1000089372" description="Dihydroxy-acid dehydratase">
    <location>
        <begin position="1"/>
        <end position="614"/>
    </location>
</feature>
<feature type="active site" description="Proton acceptor" evidence="1">
    <location>
        <position position="515"/>
    </location>
</feature>
<feature type="binding site" evidence="1">
    <location>
        <position position="81"/>
    </location>
    <ligand>
        <name>Mg(2+)</name>
        <dbReference type="ChEBI" id="CHEBI:18420"/>
    </ligand>
</feature>
<feature type="binding site" evidence="1">
    <location>
        <position position="122"/>
    </location>
    <ligand>
        <name>[2Fe-2S] cluster</name>
        <dbReference type="ChEBI" id="CHEBI:190135"/>
    </ligand>
</feature>
<feature type="binding site" evidence="1">
    <location>
        <position position="123"/>
    </location>
    <ligand>
        <name>Mg(2+)</name>
        <dbReference type="ChEBI" id="CHEBI:18420"/>
    </ligand>
</feature>
<feature type="binding site" description="via carbamate group" evidence="1">
    <location>
        <position position="124"/>
    </location>
    <ligand>
        <name>Mg(2+)</name>
        <dbReference type="ChEBI" id="CHEBI:18420"/>
    </ligand>
</feature>
<feature type="binding site" evidence="1">
    <location>
        <position position="193"/>
    </location>
    <ligand>
        <name>[2Fe-2S] cluster</name>
        <dbReference type="ChEBI" id="CHEBI:190135"/>
    </ligand>
</feature>
<feature type="binding site" evidence="1">
    <location>
        <position position="489"/>
    </location>
    <ligand>
        <name>Mg(2+)</name>
        <dbReference type="ChEBI" id="CHEBI:18420"/>
    </ligand>
</feature>
<feature type="modified residue" description="N6-carboxylysine" evidence="1">
    <location>
        <position position="124"/>
    </location>
</feature>
<dbReference type="EC" id="4.2.1.9" evidence="1"/>
<dbReference type="EMBL" id="CP000934">
    <property type="protein sequence ID" value="ACE83597.1"/>
    <property type="molecule type" value="Genomic_DNA"/>
</dbReference>
<dbReference type="RefSeq" id="WP_012486157.1">
    <property type="nucleotide sequence ID" value="NC_010995.1"/>
</dbReference>
<dbReference type="SMR" id="B3PIW6"/>
<dbReference type="STRING" id="498211.CJA_0477"/>
<dbReference type="KEGG" id="cja:CJA_0477"/>
<dbReference type="eggNOG" id="COG0129">
    <property type="taxonomic scope" value="Bacteria"/>
</dbReference>
<dbReference type="HOGENOM" id="CLU_014271_4_2_6"/>
<dbReference type="OrthoDB" id="9807077at2"/>
<dbReference type="UniPathway" id="UPA00047">
    <property type="reaction ID" value="UER00057"/>
</dbReference>
<dbReference type="UniPathway" id="UPA00049">
    <property type="reaction ID" value="UER00061"/>
</dbReference>
<dbReference type="Proteomes" id="UP000001036">
    <property type="component" value="Chromosome"/>
</dbReference>
<dbReference type="GO" id="GO:0005829">
    <property type="term" value="C:cytosol"/>
    <property type="evidence" value="ECO:0007669"/>
    <property type="project" value="TreeGrafter"/>
</dbReference>
<dbReference type="GO" id="GO:0051537">
    <property type="term" value="F:2 iron, 2 sulfur cluster binding"/>
    <property type="evidence" value="ECO:0007669"/>
    <property type="project" value="UniProtKB-UniRule"/>
</dbReference>
<dbReference type="GO" id="GO:0004160">
    <property type="term" value="F:dihydroxy-acid dehydratase activity"/>
    <property type="evidence" value="ECO:0007669"/>
    <property type="project" value="UniProtKB-UniRule"/>
</dbReference>
<dbReference type="GO" id="GO:0000287">
    <property type="term" value="F:magnesium ion binding"/>
    <property type="evidence" value="ECO:0007669"/>
    <property type="project" value="UniProtKB-UniRule"/>
</dbReference>
<dbReference type="GO" id="GO:0009097">
    <property type="term" value="P:isoleucine biosynthetic process"/>
    <property type="evidence" value="ECO:0007669"/>
    <property type="project" value="UniProtKB-UniRule"/>
</dbReference>
<dbReference type="GO" id="GO:0009099">
    <property type="term" value="P:L-valine biosynthetic process"/>
    <property type="evidence" value="ECO:0007669"/>
    <property type="project" value="UniProtKB-UniRule"/>
</dbReference>
<dbReference type="FunFam" id="3.50.30.80:FF:000001">
    <property type="entry name" value="Dihydroxy-acid dehydratase"/>
    <property type="match status" value="1"/>
</dbReference>
<dbReference type="Gene3D" id="3.50.30.80">
    <property type="entry name" value="IlvD/EDD C-terminal domain-like"/>
    <property type="match status" value="1"/>
</dbReference>
<dbReference type="HAMAP" id="MF_00012">
    <property type="entry name" value="IlvD"/>
    <property type="match status" value="1"/>
</dbReference>
<dbReference type="InterPro" id="IPR042096">
    <property type="entry name" value="Dihydro-acid_dehy_C"/>
</dbReference>
<dbReference type="InterPro" id="IPR004404">
    <property type="entry name" value="DihydroxyA_deHydtase"/>
</dbReference>
<dbReference type="InterPro" id="IPR020558">
    <property type="entry name" value="DiOHA_6PGluconate_deHydtase_CS"/>
</dbReference>
<dbReference type="InterPro" id="IPR056740">
    <property type="entry name" value="ILV_EDD_C"/>
</dbReference>
<dbReference type="InterPro" id="IPR000581">
    <property type="entry name" value="ILV_EDD_N"/>
</dbReference>
<dbReference type="InterPro" id="IPR037237">
    <property type="entry name" value="IlvD/EDD_N"/>
</dbReference>
<dbReference type="NCBIfam" id="TIGR00110">
    <property type="entry name" value="ilvD"/>
    <property type="match status" value="1"/>
</dbReference>
<dbReference type="NCBIfam" id="NF009103">
    <property type="entry name" value="PRK12448.1"/>
    <property type="match status" value="1"/>
</dbReference>
<dbReference type="PANTHER" id="PTHR43661">
    <property type="entry name" value="D-XYLONATE DEHYDRATASE"/>
    <property type="match status" value="1"/>
</dbReference>
<dbReference type="PANTHER" id="PTHR43661:SF3">
    <property type="entry name" value="D-XYLONATE DEHYDRATASE YAGF-RELATED"/>
    <property type="match status" value="1"/>
</dbReference>
<dbReference type="Pfam" id="PF24877">
    <property type="entry name" value="ILV_EDD_C"/>
    <property type="match status" value="1"/>
</dbReference>
<dbReference type="Pfam" id="PF00920">
    <property type="entry name" value="ILVD_EDD_N"/>
    <property type="match status" value="1"/>
</dbReference>
<dbReference type="SUPFAM" id="SSF143975">
    <property type="entry name" value="IlvD/EDD N-terminal domain-like"/>
    <property type="match status" value="1"/>
</dbReference>
<dbReference type="SUPFAM" id="SSF52016">
    <property type="entry name" value="LeuD/IlvD-like"/>
    <property type="match status" value="1"/>
</dbReference>
<dbReference type="PROSITE" id="PS00886">
    <property type="entry name" value="ILVD_EDD_1"/>
    <property type="match status" value="1"/>
</dbReference>
<dbReference type="PROSITE" id="PS00887">
    <property type="entry name" value="ILVD_EDD_2"/>
    <property type="match status" value="1"/>
</dbReference>
<gene>
    <name evidence="1" type="primary">ilvD</name>
    <name type="ordered locus">CJA_0477</name>
</gene>
<reference key="1">
    <citation type="journal article" date="2008" name="J. Bacteriol.">
        <title>Insights into plant cell wall degradation from the genome sequence of the soil bacterium Cellvibrio japonicus.</title>
        <authorList>
            <person name="DeBoy R.T."/>
            <person name="Mongodin E.F."/>
            <person name="Fouts D.E."/>
            <person name="Tailford L.E."/>
            <person name="Khouri H."/>
            <person name="Emerson J.B."/>
            <person name="Mohamoud Y."/>
            <person name="Watkins K."/>
            <person name="Henrissat B."/>
            <person name="Gilbert H.J."/>
            <person name="Nelson K.E."/>
        </authorList>
    </citation>
    <scope>NUCLEOTIDE SEQUENCE [LARGE SCALE GENOMIC DNA]</scope>
    <source>
        <strain>Ueda107</strain>
    </source>
</reference>
<organism>
    <name type="scientific">Cellvibrio japonicus (strain Ueda107)</name>
    <name type="common">Pseudomonas fluorescens subsp. cellulosa</name>
    <dbReference type="NCBI Taxonomy" id="498211"/>
    <lineage>
        <taxon>Bacteria</taxon>
        <taxon>Pseudomonadati</taxon>
        <taxon>Pseudomonadota</taxon>
        <taxon>Gammaproteobacteria</taxon>
        <taxon>Cellvibrionales</taxon>
        <taxon>Cellvibrionaceae</taxon>
        <taxon>Cellvibrio</taxon>
    </lineage>
</organism>
<accession>B3PIW6</accession>
<evidence type="ECO:0000255" key="1">
    <source>
        <dbReference type="HAMAP-Rule" id="MF_00012"/>
    </source>
</evidence>
<name>ILVD_CELJU</name>
<comment type="function">
    <text evidence="1">Functions in the biosynthesis of branched-chain amino acids. Catalyzes the dehydration of (2R,3R)-2,3-dihydroxy-3-methylpentanoate (2,3-dihydroxy-3-methylvalerate) into 2-oxo-3-methylpentanoate (2-oxo-3-methylvalerate) and of (2R)-2,3-dihydroxy-3-methylbutanoate (2,3-dihydroxyisovalerate) into 2-oxo-3-methylbutanoate (2-oxoisovalerate), the penultimate precursor to L-isoleucine and L-valine, respectively.</text>
</comment>
<comment type="catalytic activity">
    <reaction evidence="1">
        <text>(2R)-2,3-dihydroxy-3-methylbutanoate = 3-methyl-2-oxobutanoate + H2O</text>
        <dbReference type="Rhea" id="RHEA:24809"/>
        <dbReference type="ChEBI" id="CHEBI:11851"/>
        <dbReference type="ChEBI" id="CHEBI:15377"/>
        <dbReference type="ChEBI" id="CHEBI:49072"/>
        <dbReference type="EC" id="4.2.1.9"/>
    </reaction>
    <physiologicalReaction direction="left-to-right" evidence="1">
        <dbReference type="Rhea" id="RHEA:24810"/>
    </physiologicalReaction>
</comment>
<comment type="catalytic activity">
    <reaction evidence="1">
        <text>(2R,3R)-2,3-dihydroxy-3-methylpentanoate = (S)-3-methyl-2-oxopentanoate + H2O</text>
        <dbReference type="Rhea" id="RHEA:27694"/>
        <dbReference type="ChEBI" id="CHEBI:15377"/>
        <dbReference type="ChEBI" id="CHEBI:35146"/>
        <dbReference type="ChEBI" id="CHEBI:49258"/>
        <dbReference type="EC" id="4.2.1.9"/>
    </reaction>
    <physiologicalReaction direction="left-to-right" evidence="1">
        <dbReference type="Rhea" id="RHEA:27695"/>
    </physiologicalReaction>
</comment>
<comment type="cofactor">
    <cofactor evidence="1">
        <name>[2Fe-2S] cluster</name>
        <dbReference type="ChEBI" id="CHEBI:190135"/>
    </cofactor>
    <text evidence="1">Binds 1 [2Fe-2S] cluster per subunit. This cluster acts as a Lewis acid cofactor.</text>
</comment>
<comment type="cofactor">
    <cofactor evidence="1">
        <name>Mg(2+)</name>
        <dbReference type="ChEBI" id="CHEBI:18420"/>
    </cofactor>
</comment>
<comment type="pathway">
    <text evidence="1">Amino-acid biosynthesis; L-isoleucine biosynthesis; L-isoleucine from 2-oxobutanoate: step 3/4.</text>
</comment>
<comment type="pathway">
    <text evidence="1">Amino-acid biosynthesis; L-valine biosynthesis; L-valine from pyruvate: step 3/4.</text>
</comment>
<comment type="subunit">
    <text evidence="1">Homodimer.</text>
</comment>
<comment type="similarity">
    <text evidence="1">Belongs to the IlvD/Edd family.</text>
</comment>
<proteinExistence type="inferred from homology"/>
<keyword id="KW-0001">2Fe-2S</keyword>
<keyword id="KW-0028">Amino-acid biosynthesis</keyword>
<keyword id="KW-0100">Branched-chain amino acid biosynthesis</keyword>
<keyword id="KW-0408">Iron</keyword>
<keyword id="KW-0411">Iron-sulfur</keyword>
<keyword id="KW-0456">Lyase</keyword>
<keyword id="KW-0460">Magnesium</keyword>
<keyword id="KW-0479">Metal-binding</keyword>
<keyword id="KW-1185">Reference proteome</keyword>